<sequence>MAKAEKVTAVAEIAEQFKSSTATVVTEYRGLSVGKLTELRRALGAEATYSVAKNTLVKRAAAEAGVEGLDDLFVGPTAITFIKGEPVNAAKALKTFAKENKALIIKGGYMDGAALSVAEVEQIADLETREVLLAKLAGALKGNLAKAAGLFNAPASQVARLAAALEEKKRAEGGAE</sequence>
<name>RL10_NOCFA</name>
<proteinExistence type="inferred from homology"/>
<protein>
    <recommendedName>
        <fullName evidence="1">Large ribosomal subunit protein uL10</fullName>
    </recommendedName>
    <alternativeName>
        <fullName evidence="2">50S ribosomal protein L10</fullName>
    </alternativeName>
</protein>
<comment type="function">
    <text evidence="1">Forms part of the ribosomal stalk, playing a central role in the interaction of the ribosome with GTP-bound translation factors.</text>
</comment>
<comment type="subunit">
    <text evidence="1">Part of the ribosomal stalk of the 50S ribosomal subunit. The N-terminus interacts with L11 and the large rRNA to form the base of the stalk. The C-terminus forms an elongated spine to which L12 dimers bind in a sequential fashion forming a multimeric L10(L12)X complex.</text>
</comment>
<comment type="similarity">
    <text evidence="1">Belongs to the universal ribosomal protein uL10 family.</text>
</comment>
<dbReference type="EMBL" id="AP006618">
    <property type="protein sequence ID" value="BAD59964.1"/>
    <property type="molecule type" value="Genomic_DNA"/>
</dbReference>
<dbReference type="RefSeq" id="WP_011211646.1">
    <property type="nucleotide sequence ID" value="NC_006361.1"/>
</dbReference>
<dbReference type="SMR" id="Q5YPC7"/>
<dbReference type="STRING" id="247156.NFA_51120"/>
<dbReference type="GeneID" id="61135686"/>
<dbReference type="KEGG" id="nfa:NFA_51120"/>
<dbReference type="eggNOG" id="COG0244">
    <property type="taxonomic scope" value="Bacteria"/>
</dbReference>
<dbReference type="HOGENOM" id="CLU_092227_1_0_11"/>
<dbReference type="OrthoDB" id="3186107at2"/>
<dbReference type="Proteomes" id="UP000006820">
    <property type="component" value="Chromosome"/>
</dbReference>
<dbReference type="GO" id="GO:0015934">
    <property type="term" value="C:large ribosomal subunit"/>
    <property type="evidence" value="ECO:0007669"/>
    <property type="project" value="InterPro"/>
</dbReference>
<dbReference type="GO" id="GO:0070180">
    <property type="term" value="F:large ribosomal subunit rRNA binding"/>
    <property type="evidence" value="ECO:0007669"/>
    <property type="project" value="UniProtKB-UniRule"/>
</dbReference>
<dbReference type="GO" id="GO:0003735">
    <property type="term" value="F:structural constituent of ribosome"/>
    <property type="evidence" value="ECO:0007669"/>
    <property type="project" value="InterPro"/>
</dbReference>
<dbReference type="GO" id="GO:0006412">
    <property type="term" value="P:translation"/>
    <property type="evidence" value="ECO:0007669"/>
    <property type="project" value="UniProtKB-UniRule"/>
</dbReference>
<dbReference type="CDD" id="cd05797">
    <property type="entry name" value="Ribosomal_L10"/>
    <property type="match status" value="1"/>
</dbReference>
<dbReference type="Gene3D" id="3.30.70.1730">
    <property type="match status" value="1"/>
</dbReference>
<dbReference type="Gene3D" id="6.10.250.290">
    <property type="match status" value="1"/>
</dbReference>
<dbReference type="HAMAP" id="MF_00362">
    <property type="entry name" value="Ribosomal_uL10"/>
    <property type="match status" value="1"/>
</dbReference>
<dbReference type="InterPro" id="IPR001790">
    <property type="entry name" value="Ribosomal_uL10"/>
</dbReference>
<dbReference type="InterPro" id="IPR043141">
    <property type="entry name" value="Ribosomal_uL10-like_sf"/>
</dbReference>
<dbReference type="InterPro" id="IPR022973">
    <property type="entry name" value="Ribosomal_uL10_bac"/>
</dbReference>
<dbReference type="InterPro" id="IPR047865">
    <property type="entry name" value="Ribosomal_uL10_bac_type"/>
</dbReference>
<dbReference type="InterPro" id="IPR002363">
    <property type="entry name" value="Ribosomal_uL10_CS_bac"/>
</dbReference>
<dbReference type="NCBIfam" id="NF000955">
    <property type="entry name" value="PRK00099.1-1"/>
    <property type="match status" value="1"/>
</dbReference>
<dbReference type="PANTHER" id="PTHR11560">
    <property type="entry name" value="39S RIBOSOMAL PROTEIN L10, MITOCHONDRIAL"/>
    <property type="match status" value="1"/>
</dbReference>
<dbReference type="Pfam" id="PF00466">
    <property type="entry name" value="Ribosomal_L10"/>
    <property type="match status" value="1"/>
</dbReference>
<dbReference type="SUPFAM" id="SSF160369">
    <property type="entry name" value="Ribosomal protein L10-like"/>
    <property type="match status" value="1"/>
</dbReference>
<dbReference type="PROSITE" id="PS01109">
    <property type="entry name" value="RIBOSOMAL_L10"/>
    <property type="match status" value="1"/>
</dbReference>
<keyword id="KW-1185">Reference proteome</keyword>
<keyword id="KW-0687">Ribonucleoprotein</keyword>
<keyword id="KW-0689">Ribosomal protein</keyword>
<keyword id="KW-0694">RNA-binding</keyword>
<keyword id="KW-0699">rRNA-binding</keyword>
<reference key="1">
    <citation type="journal article" date="2004" name="Proc. Natl. Acad. Sci. U.S.A.">
        <title>The complete genomic sequence of Nocardia farcinica IFM 10152.</title>
        <authorList>
            <person name="Ishikawa J."/>
            <person name="Yamashita A."/>
            <person name="Mikami Y."/>
            <person name="Hoshino Y."/>
            <person name="Kurita H."/>
            <person name="Hotta K."/>
            <person name="Shiba T."/>
            <person name="Hattori M."/>
        </authorList>
    </citation>
    <scope>NUCLEOTIDE SEQUENCE [LARGE SCALE GENOMIC DNA]</scope>
    <source>
        <strain>IFM 10152</strain>
    </source>
</reference>
<organism>
    <name type="scientific">Nocardia farcinica (strain IFM 10152)</name>
    <dbReference type="NCBI Taxonomy" id="247156"/>
    <lineage>
        <taxon>Bacteria</taxon>
        <taxon>Bacillati</taxon>
        <taxon>Actinomycetota</taxon>
        <taxon>Actinomycetes</taxon>
        <taxon>Mycobacteriales</taxon>
        <taxon>Nocardiaceae</taxon>
        <taxon>Nocardia</taxon>
    </lineage>
</organism>
<feature type="chain" id="PRO_0000154678" description="Large ribosomal subunit protein uL10">
    <location>
        <begin position="1"/>
        <end position="176"/>
    </location>
</feature>
<accession>Q5YPC7</accession>
<gene>
    <name evidence="1" type="primary">rplJ</name>
    <name type="ordered locus">NFA_51120</name>
</gene>
<evidence type="ECO:0000255" key="1">
    <source>
        <dbReference type="HAMAP-Rule" id="MF_00362"/>
    </source>
</evidence>
<evidence type="ECO:0000305" key="2"/>